<name>MUTS_ACIAD</name>
<comment type="function">
    <text evidence="1">This protein is involved in the repair of mismatches in DNA. It is possible that it carries out the mismatch recognition step. This protein has a weak ATPase activity.</text>
</comment>
<comment type="similarity">
    <text evidence="1">Belongs to the DNA mismatch repair MutS family.</text>
</comment>
<accession>Q6FC54</accession>
<sequence>MNSTETMADLSSYTPMMQQYFKVKLEHQHALLFYRMGDFYELFFDDARKAAKLLGITLTHRGKANGEPIPMAGVPYHAAEGYLARLVRAGQTVAICEQVGEGENAGSRCKAPMERKVVRIITPGTITDDALLGSYQSSNLVALCIQQNKIGIALLDLSASIFKVQQHEFKTEQLYIELARLMPSEIVVDEDLVDQNILEQIKKQIECSITKRPNVDFNLNNAQKTLCDQFGVTTLSGFGIDHLPLAKAAAAALIHYAKETQKTALPHIRSIQLEQSTDFIALDPITRRNLEIIDPLFEHGTSLFNLINDCQTAMGGRLLSRILMQPIRDTAILDARLDATEQLLIGYHESPVRLVLKEIGDIERVLSRVALGTARPRDLVQLRQACAQIPFLRHALLPAIQTKSSKLLNELDHELGDFKDLHQLLLSAIVENPPVLLRDGNVIAEGYDAELDELRKIRDHAGQFLVDLEIKERESSGIPTLKIGYNRVSGYYIELTRAQAEQAPAYYIRRQTLKNAERYITPELKSFEDKVLSSESRALAREKLLFESLLETLKKNIANLQMMSSAIAQIDVLANFAHQARLQNWNRPDFSPEIGIKIHDGRHPVVEALSKTPYTPNDTFLDSQHRMAIITGPNMGGKSTFMRQTALISLLAYCGSYVPAKSAKLGPIDRIFTRIGSADDLSTGKSTFMVEMTETSQILHHATHQSLVLMDEVGRGTSTYDGLSLAWACVLDLTKRIKCLCLFATHYFELTELGSESAIDNYHVTAKEMNGNLILLHKVQHGPASQSHGLQVAKLAGIPASVIKEAQKRLKILEKQQQQYFQTAVQNDLFAIPELPQIDETKIEIKKTSPVLDHLKQLDVDSLTPRQALEALYQLKDQLEH</sequence>
<organism>
    <name type="scientific">Acinetobacter baylyi (strain ATCC 33305 / BD413 / ADP1)</name>
    <dbReference type="NCBI Taxonomy" id="62977"/>
    <lineage>
        <taxon>Bacteria</taxon>
        <taxon>Pseudomonadati</taxon>
        <taxon>Pseudomonadota</taxon>
        <taxon>Gammaproteobacteria</taxon>
        <taxon>Moraxellales</taxon>
        <taxon>Moraxellaceae</taxon>
        <taxon>Acinetobacter</taxon>
    </lineage>
</organism>
<reference key="1">
    <citation type="journal article" date="2004" name="Nucleic Acids Res.">
        <title>Unique features revealed by the genome sequence of Acinetobacter sp. ADP1, a versatile and naturally transformation competent bacterium.</title>
        <authorList>
            <person name="Barbe V."/>
            <person name="Vallenet D."/>
            <person name="Fonknechten N."/>
            <person name="Kreimeyer A."/>
            <person name="Oztas S."/>
            <person name="Labarre L."/>
            <person name="Cruveiller S."/>
            <person name="Robert C."/>
            <person name="Duprat S."/>
            <person name="Wincker P."/>
            <person name="Ornston L.N."/>
            <person name="Weissenbach J."/>
            <person name="Marliere P."/>
            <person name="Cohen G.N."/>
            <person name="Medigue C."/>
        </authorList>
    </citation>
    <scope>NUCLEOTIDE SEQUENCE [LARGE SCALE GENOMIC DNA]</scope>
    <source>
        <strain>ATCC 33305 / BD413 / ADP1</strain>
    </source>
</reference>
<dbReference type="EMBL" id="CR543861">
    <property type="protein sequence ID" value="CAG68357.1"/>
    <property type="molecule type" value="Genomic_DNA"/>
</dbReference>
<dbReference type="RefSeq" id="WP_004925309.1">
    <property type="nucleotide sequence ID" value="NC_005966.1"/>
</dbReference>
<dbReference type="SMR" id="Q6FC54"/>
<dbReference type="STRING" id="202950.GCA_001485005_02067"/>
<dbReference type="GeneID" id="45233906"/>
<dbReference type="KEGG" id="aci:ACIAD1500"/>
<dbReference type="eggNOG" id="COG0249">
    <property type="taxonomic scope" value="Bacteria"/>
</dbReference>
<dbReference type="HOGENOM" id="CLU_002472_4_0_6"/>
<dbReference type="OrthoDB" id="9802448at2"/>
<dbReference type="BioCyc" id="ASP62977:ACIAD_RS06920-MONOMER"/>
<dbReference type="Proteomes" id="UP000000430">
    <property type="component" value="Chromosome"/>
</dbReference>
<dbReference type="GO" id="GO:0005829">
    <property type="term" value="C:cytosol"/>
    <property type="evidence" value="ECO:0007669"/>
    <property type="project" value="TreeGrafter"/>
</dbReference>
<dbReference type="GO" id="GO:0005524">
    <property type="term" value="F:ATP binding"/>
    <property type="evidence" value="ECO:0007669"/>
    <property type="project" value="UniProtKB-UniRule"/>
</dbReference>
<dbReference type="GO" id="GO:0140664">
    <property type="term" value="F:ATP-dependent DNA damage sensor activity"/>
    <property type="evidence" value="ECO:0007669"/>
    <property type="project" value="InterPro"/>
</dbReference>
<dbReference type="GO" id="GO:0003684">
    <property type="term" value="F:damaged DNA binding"/>
    <property type="evidence" value="ECO:0007669"/>
    <property type="project" value="UniProtKB-UniRule"/>
</dbReference>
<dbReference type="GO" id="GO:0030983">
    <property type="term" value="F:mismatched DNA binding"/>
    <property type="evidence" value="ECO:0007669"/>
    <property type="project" value="InterPro"/>
</dbReference>
<dbReference type="GO" id="GO:0006298">
    <property type="term" value="P:mismatch repair"/>
    <property type="evidence" value="ECO:0007669"/>
    <property type="project" value="UniProtKB-UniRule"/>
</dbReference>
<dbReference type="FunFam" id="1.10.1420.10:FF:000002">
    <property type="entry name" value="DNA mismatch repair protein MutS"/>
    <property type="match status" value="1"/>
</dbReference>
<dbReference type="FunFam" id="3.40.1170.10:FF:000001">
    <property type="entry name" value="DNA mismatch repair protein MutS"/>
    <property type="match status" value="1"/>
</dbReference>
<dbReference type="FunFam" id="3.40.50.300:FF:000870">
    <property type="entry name" value="MutS protein homolog 4"/>
    <property type="match status" value="1"/>
</dbReference>
<dbReference type="Gene3D" id="1.10.1420.10">
    <property type="match status" value="2"/>
</dbReference>
<dbReference type="Gene3D" id="6.10.140.430">
    <property type="match status" value="1"/>
</dbReference>
<dbReference type="Gene3D" id="3.40.1170.10">
    <property type="entry name" value="DNA repair protein MutS, domain I"/>
    <property type="match status" value="1"/>
</dbReference>
<dbReference type="Gene3D" id="3.30.420.110">
    <property type="entry name" value="MutS, connector domain"/>
    <property type="match status" value="1"/>
</dbReference>
<dbReference type="Gene3D" id="3.40.50.300">
    <property type="entry name" value="P-loop containing nucleotide triphosphate hydrolases"/>
    <property type="match status" value="1"/>
</dbReference>
<dbReference type="HAMAP" id="MF_00096">
    <property type="entry name" value="MutS"/>
    <property type="match status" value="1"/>
</dbReference>
<dbReference type="InterPro" id="IPR005748">
    <property type="entry name" value="DNA_mismatch_repair_MutS"/>
</dbReference>
<dbReference type="InterPro" id="IPR007695">
    <property type="entry name" value="DNA_mismatch_repair_MutS-lik_N"/>
</dbReference>
<dbReference type="InterPro" id="IPR017261">
    <property type="entry name" value="DNA_mismatch_repair_MutS/MSH"/>
</dbReference>
<dbReference type="InterPro" id="IPR000432">
    <property type="entry name" value="DNA_mismatch_repair_MutS_C"/>
</dbReference>
<dbReference type="InterPro" id="IPR007861">
    <property type="entry name" value="DNA_mismatch_repair_MutS_clamp"/>
</dbReference>
<dbReference type="InterPro" id="IPR007696">
    <property type="entry name" value="DNA_mismatch_repair_MutS_core"/>
</dbReference>
<dbReference type="InterPro" id="IPR016151">
    <property type="entry name" value="DNA_mismatch_repair_MutS_N"/>
</dbReference>
<dbReference type="InterPro" id="IPR036187">
    <property type="entry name" value="DNA_mismatch_repair_MutS_sf"/>
</dbReference>
<dbReference type="InterPro" id="IPR007860">
    <property type="entry name" value="DNA_mmatch_repair_MutS_con_dom"/>
</dbReference>
<dbReference type="InterPro" id="IPR045076">
    <property type="entry name" value="MutS"/>
</dbReference>
<dbReference type="InterPro" id="IPR036678">
    <property type="entry name" value="MutS_con_dom_sf"/>
</dbReference>
<dbReference type="InterPro" id="IPR027417">
    <property type="entry name" value="P-loop_NTPase"/>
</dbReference>
<dbReference type="NCBIfam" id="TIGR01070">
    <property type="entry name" value="mutS1"/>
    <property type="match status" value="1"/>
</dbReference>
<dbReference type="NCBIfam" id="NF003810">
    <property type="entry name" value="PRK05399.1"/>
    <property type="match status" value="1"/>
</dbReference>
<dbReference type="PANTHER" id="PTHR11361:SF34">
    <property type="entry name" value="DNA MISMATCH REPAIR PROTEIN MSH1, MITOCHONDRIAL"/>
    <property type="match status" value="1"/>
</dbReference>
<dbReference type="PANTHER" id="PTHR11361">
    <property type="entry name" value="DNA MISMATCH REPAIR PROTEIN MUTS FAMILY MEMBER"/>
    <property type="match status" value="1"/>
</dbReference>
<dbReference type="Pfam" id="PF01624">
    <property type="entry name" value="MutS_I"/>
    <property type="match status" value="1"/>
</dbReference>
<dbReference type="Pfam" id="PF05188">
    <property type="entry name" value="MutS_II"/>
    <property type="match status" value="1"/>
</dbReference>
<dbReference type="Pfam" id="PF05192">
    <property type="entry name" value="MutS_III"/>
    <property type="match status" value="1"/>
</dbReference>
<dbReference type="Pfam" id="PF05190">
    <property type="entry name" value="MutS_IV"/>
    <property type="match status" value="1"/>
</dbReference>
<dbReference type="Pfam" id="PF00488">
    <property type="entry name" value="MutS_V"/>
    <property type="match status" value="1"/>
</dbReference>
<dbReference type="PIRSF" id="PIRSF037677">
    <property type="entry name" value="DNA_mis_repair_Msh6"/>
    <property type="match status" value="1"/>
</dbReference>
<dbReference type="SMART" id="SM00534">
    <property type="entry name" value="MUTSac"/>
    <property type="match status" value="1"/>
</dbReference>
<dbReference type="SMART" id="SM00533">
    <property type="entry name" value="MUTSd"/>
    <property type="match status" value="1"/>
</dbReference>
<dbReference type="SUPFAM" id="SSF55271">
    <property type="entry name" value="DNA repair protein MutS, domain I"/>
    <property type="match status" value="1"/>
</dbReference>
<dbReference type="SUPFAM" id="SSF53150">
    <property type="entry name" value="DNA repair protein MutS, domain II"/>
    <property type="match status" value="1"/>
</dbReference>
<dbReference type="SUPFAM" id="SSF48334">
    <property type="entry name" value="DNA repair protein MutS, domain III"/>
    <property type="match status" value="1"/>
</dbReference>
<dbReference type="SUPFAM" id="SSF52540">
    <property type="entry name" value="P-loop containing nucleoside triphosphate hydrolases"/>
    <property type="match status" value="1"/>
</dbReference>
<dbReference type="PROSITE" id="PS00486">
    <property type="entry name" value="DNA_MISMATCH_REPAIR_2"/>
    <property type="match status" value="1"/>
</dbReference>
<gene>
    <name evidence="1" type="primary">mutS</name>
    <name type="ordered locus">ACIAD1500</name>
</gene>
<keyword id="KW-0067">ATP-binding</keyword>
<keyword id="KW-0227">DNA damage</keyword>
<keyword id="KW-0234">DNA repair</keyword>
<keyword id="KW-0238">DNA-binding</keyword>
<keyword id="KW-0547">Nucleotide-binding</keyword>
<proteinExistence type="inferred from homology"/>
<evidence type="ECO:0000255" key="1">
    <source>
        <dbReference type="HAMAP-Rule" id="MF_00096"/>
    </source>
</evidence>
<feature type="chain" id="PRO_0000224343" description="DNA mismatch repair protein MutS">
    <location>
        <begin position="1"/>
        <end position="881"/>
    </location>
</feature>
<feature type="binding site" evidence="1">
    <location>
        <begin position="632"/>
        <end position="639"/>
    </location>
    <ligand>
        <name>ATP</name>
        <dbReference type="ChEBI" id="CHEBI:30616"/>
    </ligand>
</feature>
<protein>
    <recommendedName>
        <fullName evidence="1">DNA mismatch repair protein MutS</fullName>
    </recommendedName>
</protein>